<dbReference type="EMBL" id="Y08934">
    <property type="status" value="NOT_ANNOTATED_CDS"/>
    <property type="molecule type" value="Genomic_DNA"/>
</dbReference>
<dbReference type="EMBL" id="AF479988">
    <property type="protein sequence ID" value="AAL79301.1"/>
    <property type="molecule type" value="Genomic_DNA"/>
</dbReference>
<dbReference type="STRING" id="4932.YBL113W-A"/>
<dbReference type="PaxDb" id="4932-YBL113W-A"/>
<dbReference type="EnsemblFungi" id="YBL113W-A_mRNA">
    <property type="protein sequence ID" value="YBL113W-A"/>
    <property type="gene ID" value="YBL113W-A"/>
</dbReference>
<dbReference type="AGR" id="SGD:S000028599"/>
<dbReference type="SGD" id="S000028599">
    <property type="gene designation" value="YBL113W-A"/>
</dbReference>
<dbReference type="GeneTree" id="ENSGT01130000278822"/>
<dbReference type="HOGENOM" id="CLU_139933_0_0_1"/>
<dbReference type="GO" id="GO:0016020">
    <property type="term" value="C:membrane"/>
    <property type="evidence" value="ECO:0007669"/>
    <property type="project" value="UniProtKB-SubCell"/>
</dbReference>
<proteinExistence type="uncertain"/>
<feature type="chain" id="PRO_0000299783" description="Putative UPF0479 protein YBL113W-A">
    <location>
        <begin position="1"/>
        <end position="160"/>
    </location>
</feature>
<feature type="transmembrane region" description="Helical" evidence="1">
    <location>
        <begin position="39"/>
        <end position="59"/>
    </location>
</feature>
<feature type="transmembrane region" description="Helical" evidence="1">
    <location>
        <begin position="136"/>
        <end position="156"/>
    </location>
</feature>
<gene>
    <name type="ordered locus">YBL113W-A</name>
</gene>
<reference key="1">
    <citation type="journal article" date="1994" name="EMBO J.">
        <title>Complete DNA sequence of yeast chromosome II.</title>
        <authorList>
            <person name="Feldmann H."/>
            <person name="Aigle M."/>
            <person name="Aljinovic G."/>
            <person name="Andre B."/>
            <person name="Baclet M.C."/>
            <person name="Barthe C."/>
            <person name="Baur A."/>
            <person name="Becam A.-M."/>
            <person name="Biteau N."/>
            <person name="Boles E."/>
            <person name="Brandt T."/>
            <person name="Brendel M."/>
            <person name="Brueckner M."/>
            <person name="Bussereau F."/>
            <person name="Christiansen C."/>
            <person name="Contreras R."/>
            <person name="Crouzet M."/>
            <person name="Cziepluch C."/>
            <person name="Demolis N."/>
            <person name="Delaveau T."/>
            <person name="Doignon F."/>
            <person name="Domdey H."/>
            <person name="Duesterhus S."/>
            <person name="Dubois E."/>
            <person name="Dujon B."/>
            <person name="El Bakkoury M."/>
            <person name="Entian K.-D."/>
            <person name="Feuermann M."/>
            <person name="Fiers W."/>
            <person name="Fobo G.M."/>
            <person name="Fritz C."/>
            <person name="Gassenhuber J."/>
            <person name="Glansdorff N."/>
            <person name="Goffeau A."/>
            <person name="Grivell L.A."/>
            <person name="de Haan M."/>
            <person name="Hein C."/>
            <person name="Herbert C.J."/>
            <person name="Hollenberg C.P."/>
            <person name="Holmstroem K."/>
            <person name="Jacq C."/>
            <person name="Jacquet M."/>
            <person name="Jauniaux J.-C."/>
            <person name="Jonniaux J.-L."/>
            <person name="Kallesoee T."/>
            <person name="Kiesau P."/>
            <person name="Kirchrath L."/>
            <person name="Koetter P."/>
            <person name="Korol S."/>
            <person name="Liebl S."/>
            <person name="Logghe M."/>
            <person name="Lohan A.J.E."/>
            <person name="Louis E.J."/>
            <person name="Li Z.Y."/>
            <person name="Maat M.J."/>
            <person name="Mallet L."/>
            <person name="Mannhaupt G."/>
            <person name="Messenguy F."/>
            <person name="Miosga T."/>
            <person name="Molemans F."/>
            <person name="Mueller S."/>
            <person name="Nasr F."/>
            <person name="Obermaier B."/>
            <person name="Perea J."/>
            <person name="Pierard A."/>
            <person name="Piravandi E."/>
            <person name="Pohl F.M."/>
            <person name="Pohl T.M."/>
            <person name="Potier S."/>
            <person name="Proft M."/>
            <person name="Purnelle B."/>
            <person name="Ramezani Rad M."/>
            <person name="Rieger M."/>
            <person name="Rose M."/>
            <person name="Schaaff-Gerstenschlaeger I."/>
            <person name="Scherens B."/>
            <person name="Schwarzlose C."/>
            <person name="Skala J."/>
            <person name="Slonimski P.P."/>
            <person name="Smits P.H.M."/>
            <person name="Souciet J.-L."/>
            <person name="Steensma H.Y."/>
            <person name="Stucka R."/>
            <person name="Urrestarazu L.A."/>
            <person name="van der Aart Q.J.M."/>
            <person name="Van Dyck L."/>
            <person name="Vassarotti A."/>
            <person name="Vetter I."/>
            <person name="Vierendeels F."/>
            <person name="Vissers S."/>
            <person name="Wagner G."/>
            <person name="de Wergifosse P."/>
            <person name="Wolfe K.H."/>
            <person name="Zagulski M."/>
            <person name="Zimmermann F.K."/>
            <person name="Mewes H.-W."/>
            <person name="Kleine K."/>
        </authorList>
    </citation>
    <scope>NUCLEOTIDE SEQUENCE [LARGE SCALE GENOMIC DNA]</scope>
    <source>
        <strain>ATCC 204508 / S288c</strain>
    </source>
</reference>
<reference key="2">
    <citation type="journal article" date="2014" name="G3 (Bethesda)">
        <title>The reference genome sequence of Saccharomyces cerevisiae: Then and now.</title>
        <authorList>
            <person name="Engel S.R."/>
            <person name="Dietrich F.S."/>
            <person name="Fisk D.G."/>
            <person name="Binkley G."/>
            <person name="Balakrishnan R."/>
            <person name="Costanzo M.C."/>
            <person name="Dwight S.S."/>
            <person name="Hitz B.C."/>
            <person name="Karra K."/>
            <person name="Nash R.S."/>
            <person name="Weng S."/>
            <person name="Wong E.D."/>
            <person name="Lloyd P."/>
            <person name="Skrzypek M.S."/>
            <person name="Miyasato S.R."/>
            <person name="Simison M."/>
            <person name="Cherry J.M."/>
        </authorList>
    </citation>
    <scope>GENOME REANNOTATION</scope>
    <source>
        <strain>ATCC 204508 / S288c</strain>
    </source>
</reference>
<reference key="3">
    <citation type="journal article" date="2002" name="Nat. Biotechnol.">
        <title>An integrated approach for finding overlooked genes in yeast.</title>
        <authorList>
            <person name="Kumar A."/>
            <person name="Harrison P.M."/>
            <person name="Cheung K.-H."/>
            <person name="Lan N."/>
            <person name="Echols N."/>
            <person name="Bertone P."/>
            <person name="Miller P."/>
            <person name="Gerstein M.B."/>
            <person name="Snyder M."/>
        </authorList>
    </citation>
    <scope>NUCLEOTIDE SEQUENCE [GENOMIC DNA]</scope>
</reference>
<evidence type="ECO:0000255" key="1"/>
<evidence type="ECO:0000305" key="2"/>
<evidence type="ECO:0000305" key="3">
    <source>
    </source>
</evidence>
<accession>Q8TGK5</accession>
<protein>
    <recommendedName>
        <fullName>Putative UPF0479 protein YBL113W-A</fullName>
    </recommendedName>
</protein>
<comment type="subcellular location">
    <subcellularLocation>
        <location evidence="2">Membrane</location>
        <topology evidence="2">Multi-pass membrane protein</topology>
    </subcellularLocation>
</comment>
<comment type="miscellaneous">
    <text evidence="2">Completely overlaps YBL113C.</text>
</comment>
<comment type="similarity">
    <text evidence="2">Belongs to the UPF0479 family.</text>
</comment>
<comment type="caution">
    <text evidence="3">Product of a dubious gene prediction unlikely to encode a functional protein. Because of that it is not part of the S.cerevisiae S288c complete/reference proteome set.</text>
</comment>
<sequence>MMPAKLQLDVLRTLQSSARHGTQTLKNSNFLERFHKDRIVFCLPFFPALFFVPVQKVLQHLCLRFTQVAPYFIIQLFDLPSRHAENLAPLLASCRIQYTNCFSSSSNGQVPSIISLYLRVDLSPFYAKIFQISYRVPMIWLDVFQVFFVFLIISQHSLHS</sequence>
<keyword id="KW-0472">Membrane</keyword>
<keyword id="KW-0812">Transmembrane</keyword>
<keyword id="KW-1133">Transmembrane helix</keyword>
<organism>
    <name type="scientific">Saccharomyces cerevisiae (strain ATCC 204508 / S288c)</name>
    <name type="common">Baker's yeast</name>
    <dbReference type="NCBI Taxonomy" id="559292"/>
    <lineage>
        <taxon>Eukaryota</taxon>
        <taxon>Fungi</taxon>
        <taxon>Dikarya</taxon>
        <taxon>Ascomycota</taxon>
        <taxon>Saccharomycotina</taxon>
        <taxon>Saccharomycetes</taxon>
        <taxon>Saccharomycetales</taxon>
        <taxon>Saccharomycetaceae</taxon>
        <taxon>Saccharomyces</taxon>
    </lineage>
</organism>
<name>YB13A_YEAST</name>